<comment type="function">
    <text evidence="1">Together with the chaperonin GroEL, plays an essential role in assisting protein folding. The GroEL-GroES system forms a nano-cage that allows encapsulation of the non-native substrate proteins and provides a physical environment optimized to promote and accelerate protein folding. GroES binds to the apical surface of the GroEL ring, thereby capping the opening of the GroEL channel.</text>
</comment>
<comment type="subunit">
    <text evidence="1">Heptamer of 7 subunits arranged in a ring. Interacts with the chaperonin GroEL.</text>
</comment>
<comment type="subcellular location">
    <subcellularLocation>
        <location evidence="1">Cytoplasm</location>
    </subcellularLocation>
</comment>
<comment type="similarity">
    <text evidence="1 2">Belongs to the GroES chaperonin family.</text>
</comment>
<keyword id="KW-0143">Chaperone</keyword>
<keyword id="KW-0963">Cytoplasm</keyword>
<keyword id="KW-1185">Reference proteome</keyword>
<keyword id="KW-0346">Stress response</keyword>
<sequence>MSDQATTLKIKPLGDRILVKREEEASTARGGIILPDTAKKKQDRAEVLALGTGKKDDKGQQLPFEVQVGNIVLIDKYSGQELTVEGEEYVIVQMSEVIAVLQ</sequence>
<name>CH10_CHLTR</name>
<proteinExistence type="inferred from homology"/>
<evidence type="ECO:0000255" key="1">
    <source>
        <dbReference type="HAMAP-Rule" id="MF_00580"/>
    </source>
</evidence>
<evidence type="ECO:0000305" key="2"/>
<gene>
    <name evidence="1" type="primary">groES</name>
    <name evidence="1" type="synonym">groS</name>
    <name type="synonym">hypA</name>
    <name type="synonym">mopB</name>
    <name type="ordered locus">CT_111</name>
</gene>
<feature type="chain" id="PRO_0000174731" description="Co-chaperonin GroES">
    <location>
        <begin position="1"/>
        <end position="102"/>
    </location>
</feature>
<feature type="sequence variant" description="In strain: L2.">
    <original>L</original>
    <variation>V</variation>
    <location>
        <position position="48"/>
    </location>
</feature>
<feature type="sequence variant" description="In strain: L2.">
    <original>E</original>
    <variation>V</variation>
    <location>
        <position position="65"/>
    </location>
</feature>
<feature type="sequence variant" description="In strain: L2.">
    <original>N</original>
    <variation>D</variation>
    <location>
        <position position="70"/>
    </location>
</feature>
<organism>
    <name type="scientific">Chlamydia trachomatis serovar D (strain ATCC VR-885 / DSM 19411 / UW-3/Cx)</name>
    <dbReference type="NCBI Taxonomy" id="272561"/>
    <lineage>
        <taxon>Bacteria</taxon>
        <taxon>Pseudomonadati</taxon>
        <taxon>Chlamydiota</taxon>
        <taxon>Chlamydiia</taxon>
        <taxon>Chlamydiales</taxon>
        <taxon>Chlamydiaceae</taxon>
        <taxon>Chlamydia/Chlamydophila group</taxon>
        <taxon>Chlamydia</taxon>
    </lineage>
</organism>
<protein>
    <recommendedName>
        <fullName evidence="1">Co-chaperonin GroES</fullName>
    </recommendedName>
    <alternativeName>
        <fullName evidence="1">10 kDa chaperonin</fullName>
    </alternativeName>
    <alternativeName>
        <fullName>11.2 kDa stress response protein</fullName>
    </alternativeName>
    <alternativeName>
        <fullName evidence="1">Chaperonin-10</fullName>
        <shortName evidence="1">Cpn10</shortName>
    </alternativeName>
    <alternativeName>
        <fullName>Heat shock protein 10</fullName>
        <shortName>HSP10</shortName>
    </alternativeName>
</protein>
<dbReference type="EMBL" id="M58027">
    <property type="protein sequence ID" value="AAA23127.1"/>
    <property type="molecule type" value="Genomic_DNA"/>
</dbReference>
<dbReference type="EMBL" id="AE001273">
    <property type="protein sequence ID" value="AAC67702.1"/>
    <property type="molecule type" value="Genomic_DNA"/>
</dbReference>
<dbReference type="PIR" id="B60273">
    <property type="entry name" value="B60273"/>
</dbReference>
<dbReference type="PIR" id="B71555">
    <property type="entry name" value="B71555"/>
</dbReference>
<dbReference type="RefSeq" id="NP_219614.1">
    <property type="nucleotide sequence ID" value="NC_000117.1"/>
</dbReference>
<dbReference type="RefSeq" id="WP_009871458.1">
    <property type="nucleotide sequence ID" value="NC_000117.1"/>
</dbReference>
<dbReference type="SMR" id="P0C0Z8"/>
<dbReference type="FunCoup" id="P0C0Z8">
    <property type="interactions" value="241"/>
</dbReference>
<dbReference type="STRING" id="272561.CT_111"/>
<dbReference type="EnsemblBacteria" id="AAC67702">
    <property type="protein sequence ID" value="AAC67702"/>
    <property type="gene ID" value="CT_111"/>
</dbReference>
<dbReference type="GeneID" id="884062"/>
<dbReference type="KEGG" id="ctr:CT_111"/>
<dbReference type="PATRIC" id="fig|272561.5.peg.121"/>
<dbReference type="HOGENOM" id="CLU_132825_2_1_0"/>
<dbReference type="InParanoid" id="P0C0Z8"/>
<dbReference type="OrthoDB" id="9806791at2"/>
<dbReference type="Proteomes" id="UP000000431">
    <property type="component" value="Chromosome"/>
</dbReference>
<dbReference type="GO" id="GO:0005737">
    <property type="term" value="C:cytoplasm"/>
    <property type="evidence" value="ECO:0007669"/>
    <property type="project" value="UniProtKB-SubCell"/>
</dbReference>
<dbReference type="GO" id="GO:0005524">
    <property type="term" value="F:ATP binding"/>
    <property type="evidence" value="ECO:0007669"/>
    <property type="project" value="InterPro"/>
</dbReference>
<dbReference type="GO" id="GO:0046872">
    <property type="term" value="F:metal ion binding"/>
    <property type="evidence" value="ECO:0000318"/>
    <property type="project" value="GO_Central"/>
</dbReference>
<dbReference type="GO" id="GO:0044183">
    <property type="term" value="F:protein folding chaperone"/>
    <property type="evidence" value="ECO:0007669"/>
    <property type="project" value="InterPro"/>
</dbReference>
<dbReference type="GO" id="GO:0051087">
    <property type="term" value="F:protein-folding chaperone binding"/>
    <property type="evidence" value="ECO:0000318"/>
    <property type="project" value="GO_Central"/>
</dbReference>
<dbReference type="GO" id="GO:0051082">
    <property type="term" value="F:unfolded protein binding"/>
    <property type="evidence" value="ECO:0000318"/>
    <property type="project" value="GO_Central"/>
</dbReference>
<dbReference type="GO" id="GO:0051085">
    <property type="term" value="P:chaperone cofactor-dependent protein refolding"/>
    <property type="evidence" value="ECO:0000318"/>
    <property type="project" value="GO_Central"/>
</dbReference>
<dbReference type="CDD" id="cd00320">
    <property type="entry name" value="cpn10"/>
    <property type="match status" value="1"/>
</dbReference>
<dbReference type="FunFam" id="2.30.33.40:FF:000007">
    <property type="entry name" value="10 kDa chaperonin"/>
    <property type="match status" value="1"/>
</dbReference>
<dbReference type="Gene3D" id="2.30.33.40">
    <property type="entry name" value="GroES chaperonin"/>
    <property type="match status" value="1"/>
</dbReference>
<dbReference type="HAMAP" id="MF_00580">
    <property type="entry name" value="CH10"/>
    <property type="match status" value="1"/>
</dbReference>
<dbReference type="InterPro" id="IPR020818">
    <property type="entry name" value="Chaperonin_GroES"/>
</dbReference>
<dbReference type="InterPro" id="IPR037124">
    <property type="entry name" value="Chaperonin_GroES_sf"/>
</dbReference>
<dbReference type="InterPro" id="IPR018369">
    <property type="entry name" value="Chaprnonin_Cpn10_CS"/>
</dbReference>
<dbReference type="InterPro" id="IPR011032">
    <property type="entry name" value="GroES-like_sf"/>
</dbReference>
<dbReference type="NCBIfam" id="NF001531">
    <property type="entry name" value="PRK00364.2-2"/>
    <property type="match status" value="1"/>
</dbReference>
<dbReference type="NCBIfam" id="NF001533">
    <property type="entry name" value="PRK00364.2-4"/>
    <property type="match status" value="1"/>
</dbReference>
<dbReference type="PANTHER" id="PTHR10772">
    <property type="entry name" value="10 KDA HEAT SHOCK PROTEIN"/>
    <property type="match status" value="1"/>
</dbReference>
<dbReference type="PANTHER" id="PTHR10772:SF58">
    <property type="entry name" value="CO-CHAPERONIN GROES"/>
    <property type="match status" value="1"/>
</dbReference>
<dbReference type="Pfam" id="PF00166">
    <property type="entry name" value="Cpn10"/>
    <property type="match status" value="1"/>
</dbReference>
<dbReference type="PRINTS" id="PR00297">
    <property type="entry name" value="CHAPERONIN10"/>
</dbReference>
<dbReference type="SMART" id="SM00883">
    <property type="entry name" value="Cpn10"/>
    <property type="match status" value="1"/>
</dbReference>
<dbReference type="SUPFAM" id="SSF50129">
    <property type="entry name" value="GroES-like"/>
    <property type="match status" value="1"/>
</dbReference>
<dbReference type="PROSITE" id="PS00681">
    <property type="entry name" value="CHAPERONINS_CPN10"/>
    <property type="match status" value="1"/>
</dbReference>
<reference key="1">
    <citation type="journal article" date="1991" name="Infect. Immun.">
        <title>Cloning and sequence of the gene for heat shock protein 60 from Chlamydia trachomatis and immunological reactivity of the protein.</title>
        <authorList>
            <person name="Cerrone M.C."/>
            <person name="Ma J.J."/>
            <person name="Stephens R.S."/>
        </authorList>
    </citation>
    <scope>NUCLEOTIDE SEQUENCE [GENOMIC DNA]</scope>
    <source>
        <strain>L2</strain>
    </source>
</reference>
<reference key="2">
    <citation type="journal article" date="1998" name="Science">
        <title>Genome sequence of an obligate intracellular pathogen of humans: Chlamydia trachomatis.</title>
        <authorList>
            <person name="Stephens R.S."/>
            <person name="Kalman S."/>
            <person name="Lammel C.J."/>
            <person name="Fan J."/>
            <person name="Marathe R."/>
            <person name="Aravind L."/>
            <person name="Mitchell W.P."/>
            <person name="Olinger L."/>
            <person name="Tatusov R.L."/>
            <person name="Zhao Q."/>
            <person name="Koonin E.V."/>
            <person name="Davis R.W."/>
        </authorList>
    </citation>
    <scope>NUCLEOTIDE SEQUENCE [LARGE SCALE GENOMIC DNA]</scope>
    <source>
        <strain>ATCC VR-885 / DSM 19411 / UW-3/Cx</strain>
    </source>
</reference>
<accession>P0C0Z8</accession>
<accession>O84113</accession>